<protein>
    <recommendedName>
        <fullName>Uncharacterized protein RP368</fullName>
    </recommendedName>
</protein>
<proteinExistence type="predicted"/>
<dbReference type="EMBL" id="AJ235271">
    <property type="protein sequence ID" value="CAA14827.1"/>
    <property type="molecule type" value="Genomic_DNA"/>
</dbReference>
<dbReference type="PIR" id="A71694">
    <property type="entry name" value="A71694"/>
</dbReference>
<dbReference type="RefSeq" id="NP_220751.1">
    <property type="nucleotide sequence ID" value="NC_000963.1"/>
</dbReference>
<dbReference type="RefSeq" id="WP_004597515.1">
    <property type="nucleotide sequence ID" value="NC_000963.1"/>
</dbReference>
<dbReference type="STRING" id="272947.gene:17555448"/>
<dbReference type="EnsemblBacteria" id="CAA14827">
    <property type="protein sequence ID" value="CAA14827"/>
    <property type="gene ID" value="CAA14827"/>
</dbReference>
<dbReference type="KEGG" id="rpr:RP368"/>
<dbReference type="PATRIC" id="fig|272947.5.peg.378"/>
<dbReference type="eggNOG" id="COG4120">
    <property type="taxonomic scope" value="Bacteria"/>
</dbReference>
<dbReference type="HOGENOM" id="CLU_067296_0_0_5"/>
<dbReference type="OrthoDB" id="9778389at2"/>
<dbReference type="Proteomes" id="UP000002480">
    <property type="component" value="Chromosome"/>
</dbReference>
<dbReference type="GO" id="GO:0005886">
    <property type="term" value="C:plasma membrane"/>
    <property type="evidence" value="ECO:0007669"/>
    <property type="project" value="UniProtKB-SubCell"/>
</dbReference>
<dbReference type="GO" id="GO:0022857">
    <property type="term" value="F:transmembrane transporter activity"/>
    <property type="evidence" value="ECO:0007669"/>
    <property type="project" value="InterPro"/>
</dbReference>
<dbReference type="CDD" id="cd06574">
    <property type="entry name" value="TM_PBP1_branched-chain-AA_like"/>
    <property type="match status" value="1"/>
</dbReference>
<dbReference type="InterPro" id="IPR001851">
    <property type="entry name" value="ABC_transp_permease"/>
</dbReference>
<dbReference type="PANTHER" id="PTHR32196">
    <property type="entry name" value="ABC TRANSPORTER PERMEASE PROTEIN YPHD-RELATED-RELATED"/>
    <property type="match status" value="1"/>
</dbReference>
<dbReference type="PANTHER" id="PTHR32196:SF69">
    <property type="entry name" value="BRANCHED-CHAIN AMINO ACID TRANSPORT SYSTEM, PERMEASE PROTEIN"/>
    <property type="match status" value="1"/>
</dbReference>
<dbReference type="Pfam" id="PF02653">
    <property type="entry name" value="BPD_transp_2"/>
    <property type="match status" value="1"/>
</dbReference>
<accession>Q9ZDG1</accession>
<evidence type="ECO:0000255" key="1"/>
<evidence type="ECO:0000305" key="2"/>
<gene>
    <name type="ordered locus">RP368</name>
</gene>
<keyword id="KW-1003">Cell membrane</keyword>
<keyword id="KW-0472">Membrane</keyword>
<keyword id="KW-1185">Reference proteome</keyword>
<keyword id="KW-0812">Transmembrane</keyword>
<keyword id="KW-1133">Transmembrane helix</keyword>
<organism>
    <name type="scientific">Rickettsia prowazekii (strain Madrid E)</name>
    <dbReference type="NCBI Taxonomy" id="272947"/>
    <lineage>
        <taxon>Bacteria</taxon>
        <taxon>Pseudomonadati</taxon>
        <taxon>Pseudomonadota</taxon>
        <taxon>Alphaproteobacteria</taxon>
        <taxon>Rickettsiales</taxon>
        <taxon>Rickettsiaceae</taxon>
        <taxon>Rickettsieae</taxon>
        <taxon>Rickettsia</taxon>
        <taxon>typhus group</taxon>
    </lineage>
</organism>
<reference key="1">
    <citation type="journal article" date="1998" name="Nature">
        <title>The genome sequence of Rickettsia prowazekii and the origin of mitochondria.</title>
        <authorList>
            <person name="Andersson S.G.E."/>
            <person name="Zomorodipour A."/>
            <person name="Andersson J.O."/>
            <person name="Sicheritz-Ponten T."/>
            <person name="Alsmark U.C.M."/>
            <person name="Podowski R.M."/>
            <person name="Naeslund A.K."/>
            <person name="Eriksson A.-S."/>
            <person name="Winkler H.H."/>
            <person name="Kurland C.G."/>
        </authorList>
    </citation>
    <scope>NUCLEOTIDE SEQUENCE [LARGE SCALE GENOMIC DNA]</scope>
    <source>
        <strain>Madrid E</strain>
    </source>
</reference>
<feature type="chain" id="PRO_0000101358" description="Uncharacterized protein RP368">
    <location>
        <begin position="1"/>
        <end position="280"/>
    </location>
</feature>
<feature type="transmembrane region" description="Helical" evidence="1">
    <location>
        <begin position="3"/>
        <end position="23"/>
    </location>
</feature>
<feature type="transmembrane region" description="Helical" evidence="1">
    <location>
        <begin position="52"/>
        <end position="72"/>
    </location>
</feature>
<feature type="transmembrane region" description="Helical" evidence="1">
    <location>
        <begin position="81"/>
        <end position="101"/>
    </location>
</feature>
<feature type="transmembrane region" description="Helical" evidence="1">
    <location>
        <begin position="123"/>
        <end position="143"/>
    </location>
</feature>
<feature type="transmembrane region" description="Helical" evidence="1">
    <location>
        <begin position="196"/>
        <end position="216"/>
    </location>
</feature>
<feature type="transmembrane region" description="Helical" evidence="1">
    <location>
        <begin position="233"/>
        <end position="253"/>
    </location>
</feature>
<name>Y368_RICPR</name>
<sequence length="280" mass="30555">MNILITALEQSLIMLPLILGMYISYRILKITDLTVDGTYVLGAAVFARTIPFGLFHALIFAIIAGGINGSIVSFMQRNKRINGLIAGILANFMLYSVNLQIMQRPNISVLGMPTLLSILDLDNWLVPLILINSFIIVIVLILLKGNLGLFLRAFGFNKDLLIDLGKPAELYRMLGLSISNGLAALTGTLSAQVNGFADINMGYGVALVGIGAIIIGRQIFLNNINNFNALKEIFACFIGILFYFISLSILLHIGIDPINLKLILGIVLFISLSSVKREDL</sequence>
<comment type="subcellular location">
    <subcellularLocation>
        <location evidence="2">Cell membrane</location>
        <topology evidence="2">Multi-pass membrane protein</topology>
    </subcellularLocation>
</comment>